<sequence length="305" mass="34829">MAVPFLQDHDTKHDLLTMSHLSLEEIEHILHDAQQFENGALWSPEEKLFVANLFFEPSTRTRVSFEVAEQRLGLHVVNVDGERSSVQKGETLYDTAKTLESIGVNALVIRHRQDRYFEELKDRINIPIINAGDGCGHHPTQSLLDLWTIQQEFGRFSNLITVISGDLRHSRVARSNAETLTRLGARVYISGPREWMEGYEGVYPYVTMDEAVELADVIMLLRVQHERHDGTVSFTQASYHEQFGLTVKREARMKPKSIVMHPAPVNRNVEIASELVECPRSRIFKQMKNGVAIRMAVLKRALTDE</sequence>
<evidence type="ECO:0000255" key="1">
    <source>
        <dbReference type="HAMAP-Rule" id="MF_00001"/>
    </source>
</evidence>
<name>PYRB_HALH5</name>
<comment type="function">
    <text evidence="1">Catalyzes the condensation of carbamoyl phosphate and aspartate to form carbamoyl aspartate and inorganic phosphate, the committed step in the de novo pyrimidine nucleotide biosynthesis pathway.</text>
</comment>
<comment type="catalytic activity">
    <reaction evidence="1">
        <text>carbamoyl phosphate + L-aspartate = N-carbamoyl-L-aspartate + phosphate + H(+)</text>
        <dbReference type="Rhea" id="RHEA:20013"/>
        <dbReference type="ChEBI" id="CHEBI:15378"/>
        <dbReference type="ChEBI" id="CHEBI:29991"/>
        <dbReference type="ChEBI" id="CHEBI:32814"/>
        <dbReference type="ChEBI" id="CHEBI:43474"/>
        <dbReference type="ChEBI" id="CHEBI:58228"/>
        <dbReference type="EC" id="2.1.3.2"/>
    </reaction>
</comment>
<comment type="pathway">
    <text evidence="1">Pyrimidine metabolism; UMP biosynthesis via de novo pathway; (S)-dihydroorotate from bicarbonate: step 2/3.</text>
</comment>
<comment type="subunit">
    <text evidence="1">Heterododecamer (2C3:3R2) of six catalytic PyrB chains organized as two trimers (C3), and six regulatory PyrI chains organized as three dimers (R2).</text>
</comment>
<comment type="similarity">
    <text evidence="1">Belongs to the aspartate/ornithine carbamoyltransferase superfamily. ATCase family.</text>
</comment>
<feature type="chain" id="PRO_0000113095" description="Aspartate carbamoyltransferase catalytic subunit">
    <location>
        <begin position="1"/>
        <end position="305"/>
    </location>
</feature>
<feature type="binding site" evidence="1">
    <location>
        <position position="60"/>
    </location>
    <ligand>
        <name>carbamoyl phosphate</name>
        <dbReference type="ChEBI" id="CHEBI:58228"/>
    </ligand>
</feature>
<feature type="binding site" evidence="1">
    <location>
        <position position="61"/>
    </location>
    <ligand>
        <name>carbamoyl phosphate</name>
        <dbReference type="ChEBI" id="CHEBI:58228"/>
    </ligand>
</feature>
<feature type="binding site" evidence="1">
    <location>
        <position position="88"/>
    </location>
    <ligand>
        <name>L-aspartate</name>
        <dbReference type="ChEBI" id="CHEBI:29991"/>
    </ligand>
</feature>
<feature type="binding site" evidence="1">
    <location>
        <position position="110"/>
    </location>
    <ligand>
        <name>carbamoyl phosphate</name>
        <dbReference type="ChEBI" id="CHEBI:58228"/>
    </ligand>
</feature>
<feature type="binding site" evidence="1">
    <location>
        <position position="138"/>
    </location>
    <ligand>
        <name>carbamoyl phosphate</name>
        <dbReference type="ChEBI" id="CHEBI:58228"/>
    </ligand>
</feature>
<feature type="binding site" evidence="1">
    <location>
        <position position="141"/>
    </location>
    <ligand>
        <name>carbamoyl phosphate</name>
        <dbReference type="ChEBI" id="CHEBI:58228"/>
    </ligand>
</feature>
<feature type="binding site" evidence="1">
    <location>
        <position position="171"/>
    </location>
    <ligand>
        <name>L-aspartate</name>
        <dbReference type="ChEBI" id="CHEBI:29991"/>
    </ligand>
</feature>
<feature type="binding site" evidence="1">
    <location>
        <position position="222"/>
    </location>
    <ligand>
        <name>L-aspartate</name>
        <dbReference type="ChEBI" id="CHEBI:29991"/>
    </ligand>
</feature>
<feature type="binding site" evidence="1">
    <location>
        <position position="263"/>
    </location>
    <ligand>
        <name>carbamoyl phosphate</name>
        <dbReference type="ChEBI" id="CHEBI:58228"/>
    </ligand>
</feature>
<feature type="binding site" evidence="1">
    <location>
        <position position="264"/>
    </location>
    <ligand>
        <name>carbamoyl phosphate</name>
        <dbReference type="ChEBI" id="CHEBI:58228"/>
    </ligand>
</feature>
<dbReference type="EC" id="2.1.3.2" evidence="1"/>
<dbReference type="EMBL" id="BA000004">
    <property type="protein sequence ID" value="BAB06258.1"/>
    <property type="molecule type" value="Genomic_DNA"/>
</dbReference>
<dbReference type="PIR" id="C83967">
    <property type="entry name" value="C83967"/>
</dbReference>
<dbReference type="RefSeq" id="WP_010898690.1">
    <property type="nucleotide sequence ID" value="NC_002570.2"/>
</dbReference>
<dbReference type="SMR" id="Q9K9V6"/>
<dbReference type="STRING" id="272558.gene:10728437"/>
<dbReference type="KEGG" id="bha:BH2539"/>
<dbReference type="eggNOG" id="COG0540">
    <property type="taxonomic scope" value="Bacteria"/>
</dbReference>
<dbReference type="HOGENOM" id="CLU_043846_2_1_9"/>
<dbReference type="OrthoDB" id="9774690at2"/>
<dbReference type="UniPathway" id="UPA00070">
    <property type="reaction ID" value="UER00116"/>
</dbReference>
<dbReference type="Proteomes" id="UP000001258">
    <property type="component" value="Chromosome"/>
</dbReference>
<dbReference type="GO" id="GO:0005829">
    <property type="term" value="C:cytosol"/>
    <property type="evidence" value="ECO:0007669"/>
    <property type="project" value="TreeGrafter"/>
</dbReference>
<dbReference type="GO" id="GO:0016597">
    <property type="term" value="F:amino acid binding"/>
    <property type="evidence" value="ECO:0007669"/>
    <property type="project" value="InterPro"/>
</dbReference>
<dbReference type="GO" id="GO:0004070">
    <property type="term" value="F:aspartate carbamoyltransferase activity"/>
    <property type="evidence" value="ECO:0007669"/>
    <property type="project" value="UniProtKB-UniRule"/>
</dbReference>
<dbReference type="GO" id="GO:0006207">
    <property type="term" value="P:'de novo' pyrimidine nucleobase biosynthetic process"/>
    <property type="evidence" value="ECO:0007669"/>
    <property type="project" value="InterPro"/>
</dbReference>
<dbReference type="GO" id="GO:0044205">
    <property type="term" value="P:'de novo' UMP biosynthetic process"/>
    <property type="evidence" value="ECO:0007669"/>
    <property type="project" value="UniProtKB-UniRule"/>
</dbReference>
<dbReference type="GO" id="GO:0006520">
    <property type="term" value="P:amino acid metabolic process"/>
    <property type="evidence" value="ECO:0007669"/>
    <property type="project" value="InterPro"/>
</dbReference>
<dbReference type="FunFam" id="3.40.50.1370:FF:000011">
    <property type="entry name" value="Aspartate carbamoyltransferase"/>
    <property type="match status" value="1"/>
</dbReference>
<dbReference type="Gene3D" id="3.40.50.1370">
    <property type="entry name" value="Aspartate/ornithine carbamoyltransferase"/>
    <property type="match status" value="2"/>
</dbReference>
<dbReference type="HAMAP" id="MF_00001">
    <property type="entry name" value="Asp_carb_tr"/>
    <property type="match status" value="1"/>
</dbReference>
<dbReference type="InterPro" id="IPR006132">
    <property type="entry name" value="Asp/Orn_carbamoyltranf_P-bd"/>
</dbReference>
<dbReference type="InterPro" id="IPR006130">
    <property type="entry name" value="Asp/Orn_carbamoylTrfase"/>
</dbReference>
<dbReference type="InterPro" id="IPR036901">
    <property type="entry name" value="Asp/Orn_carbamoylTrfase_sf"/>
</dbReference>
<dbReference type="InterPro" id="IPR002082">
    <property type="entry name" value="Asp_carbamoyltransf"/>
</dbReference>
<dbReference type="InterPro" id="IPR006131">
    <property type="entry name" value="Asp_carbamoyltransf_Asp/Orn-bd"/>
</dbReference>
<dbReference type="NCBIfam" id="TIGR00670">
    <property type="entry name" value="asp_carb_tr"/>
    <property type="match status" value="1"/>
</dbReference>
<dbReference type="NCBIfam" id="NF002032">
    <property type="entry name" value="PRK00856.1"/>
    <property type="match status" value="1"/>
</dbReference>
<dbReference type="PANTHER" id="PTHR45753:SF6">
    <property type="entry name" value="ASPARTATE CARBAMOYLTRANSFERASE"/>
    <property type="match status" value="1"/>
</dbReference>
<dbReference type="PANTHER" id="PTHR45753">
    <property type="entry name" value="ORNITHINE CARBAMOYLTRANSFERASE, MITOCHONDRIAL"/>
    <property type="match status" value="1"/>
</dbReference>
<dbReference type="Pfam" id="PF00185">
    <property type="entry name" value="OTCace"/>
    <property type="match status" value="1"/>
</dbReference>
<dbReference type="Pfam" id="PF02729">
    <property type="entry name" value="OTCace_N"/>
    <property type="match status" value="1"/>
</dbReference>
<dbReference type="PRINTS" id="PR00100">
    <property type="entry name" value="AOTCASE"/>
</dbReference>
<dbReference type="PRINTS" id="PR00101">
    <property type="entry name" value="ATCASE"/>
</dbReference>
<dbReference type="SUPFAM" id="SSF53671">
    <property type="entry name" value="Aspartate/ornithine carbamoyltransferase"/>
    <property type="match status" value="1"/>
</dbReference>
<dbReference type="PROSITE" id="PS00097">
    <property type="entry name" value="CARBAMOYLTRANSFERASE"/>
    <property type="match status" value="1"/>
</dbReference>
<protein>
    <recommendedName>
        <fullName evidence="1">Aspartate carbamoyltransferase catalytic subunit</fullName>
        <ecNumber evidence="1">2.1.3.2</ecNumber>
    </recommendedName>
    <alternativeName>
        <fullName evidence="1">Aspartate transcarbamylase</fullName>
        <shortName evidence="1">ATCase</shortName>
    </alternativeName>
</protein>
<proteinExistence type="inferred from homology"/>
<accession>Q9K9V6</accession>
<organism>
    <name type="scientific">Halalkalibacterium halodurans (strain ATCC BAA-125 / DSM 18197 / FERM 7344 / JCM 9153 / C-125)</name>
    <name type="common">Bacillus halodurans</name>
    <dbReference type="NCBI Taxonomy" id="272558"/>
    <lineage>
        <taxon>Bacteria</taxon>
        <taxon>Bacillati</taxon>
        <taxon>Bacillota</taxon>
        <taxon>Bacilli</taxon>
        <taxon>Bacillales</taxon>
        <taxon>Bacillaceae</taxon>
        <taxon>Halalkalibacterium (ex Joshi et al. 2022)</taxon>
    </lineage>
</organism>
<keyword id="KW-0665">Pyrimidine biosynthesis</keyword>
<keyword id="KW-1185">Reference proteome</keyword>
<keyword id="KW-0808">Transferase</keyword>
<reference key="1">
    <citation type="journal article" date="2000" name="Nucleic Acids Res.">
        <title>Complete genome sequence of the alkaliphilic bacterium Bacillus halodurans and genomic sequence comparison with Bacillus subtilis.</title>
        <authorList>
            <person name="Takami H."/>
            <person name="Nakasone K."/>
            <person name="Takaki Y."/>
            <person name="Maeno G."/>
            <person name="Sasaki R."/>
            <person name="Masui N."/>
            <person name="Fuji F."/>
            <person name="Hirama C."/>
            <person name="Nakamura Y."/>
            <person name="Ogasawara N."/>
            <person name="Kuhara S."/>
            <person name="Horikoshi K."/>
        </authorList>
    </citation>
    <scope>NUCLEOTIDE SEQUENCE [LARGE SCALE GENOMIC DNA]</scope>
    <source>
        <strain>ATCC BAA-125 / DSM 18197 / FERM 7344 / JCM 9153 / C-125</strain>
    </source>
</reference>
<gene>
    <name evidence="1" type="primary">pyrB</name>
    <name type="ordered locus">BH2539</name>
</gene>